<sequence length="252" mass="28436">MSEKLRRCRKELTAAIDRAFEGVRHSQECTAQQRLDAPSLTSQPVHRLLCRNPLAACPSAAPYSGASCAPESENPAFGTHHIPVNSKLQQPLYPKRKPLTSKENVLMQSSILARDRQFWRAAGDGEDWRKDSLRKDMERDLKADPNVLLSSSSQEVTKDLLDMIDHTSIRTIEELAGKLEFENELNRVCGHCQDSPFKEEAWALLVDESPQKALDADPGSLKQALDDQNIVETVLDLEEDYNLMTSFKYQIE</sequence>
<name>CC062_MOUSE</name>
<comment type="function">
    <text evidence="1">Essential for normal spermatogenesis and male fertility.</text>
</comment>
<comment type="tissue specificity">
    <text evidence="1">Testis-specific. Highly expressed in spermatocytes (at protein level).</text>
</comment>
<comment type="disruption phenotype">
    <text evidence="1">Male mice are infertile with smaller testis and epididymis, but female mice retain normal fertility (PubMed:31930642). Spermatogenesis in the male mouse is arrested at the spermatocyte stage, and no sperm is found in the epididymis (PubMed:31930642). Germ cells apoptosis is increased without changes to the serum concentration of testosterone, LH, and FSH or synapsis and recombination during meiosis (PubMed:31930642).</text>
</comment>
<keyword id="KW-0221">Differentiation</keyword>
<keyword id="KW-0597">Phosphoprotein</keyword>
<keyword id="KW-1185">Reference proteome</keyword>
<keyword id="KW-0744">Spermatogenesis</keyword>
<organism>
    <name type="scientific">Mus musculus</name>
    <name type="common">Mouse</name>
    <dbReference type="NCBI Taxonomy" id="10090"/>
    <lineage>
        <taxon>Eukaryota</taxon>
        <taxon>Metazoa</taxon>
        <taxon>Chordata</taxon>
        <taxon>Craniata</taxon>
        <taxon>Vertebrata</taxon>
        <taxon>Euteleostomi</taxon>
        <taxon>Mammalia</taxon>
        <taxon>Eutheria</taxon>
        <taxon>Euarchontoglires</taxon>
        <taxon>Glires</taxon>
        <taxon>Rodentia</taxon>
        <taxon>Myomorpha</taxon>
        <taxon>Muroidea</taxon>
        <taxon>Muridae</taxon>
        <taxon>Murinae</taxon>
        <taxon>Mus</taxon>
        <taxon>Mus</taxon>
    </lineage>
</organism>
<feature type="chain" id="PRO_0000239306" description="Uncharacterized protein C3orf62 homolog">
    <location>
        <begin position="1"/>
        <end position="252"/>
    </location>
</feature>
<feature type="modified residue" description="Phosphoserine" evidence="3">
    <location>
        <position position="195"/>
    </location>
</feature>
<feature type="modified residue" description="Phosphoserine" evidence="3">
    <location>
        <position position="209"/>
    </location>
</feature>
<feature type="sequence conflict" description="In Ref. 1; BAB24864." evidence="2" ref="1">
    <original>G</original>
    <variation>R</variation>
    <location>
        <position position="78"/>
    </location>
</feature>
<dbReference type="EMBL" id="AK007115">
    <property type="protein sequence ID" value="BAB24864.1"/>
    <property type="molecule type" value="mRNA"/>
</dbReference>
<dbReference type="EMBL" id="GL456151">
    <property type="status" value="NOT_ANNOTATED_CDS"/>
    <property type="molecule type" value="Genomic_DNA"/>
</dbReference>
<dbReference type="EMBL" id="BC061048">
    <property type="protein sequence ID" value="AAH61048.1"/>
    <property type="molecule type" value="mRNA"/>
</dbReference>
<dbReference type="CCDS" id="CCDS23524.1"/>
<dbReference type="RefSeq" id="NP_444446.2">
    <property type="nucleotide sequence ID" value="NM_053216.3"/>
</dbReference>
<dbReference type="FunCoup" id="Q9D9C7">
    <property type="interactions" value="10"/>
</dbReference>
<dbReference type="STRING" id="10090.ENSMUSP00000035234"/>
<dbReference type="iPTMnet" id="Q9D9C7"/>
<dbReference type="PhosphoSitePlus" id="Q9D9C7"/>
<dbReference type="SwissPalm" id="Q9D9C7"/>
<dbReference type="PaxDb" id="10090-ENSMUSP00000035234"/>
<dbReference type="ProteomicsDB" id="332943"/>
<dbReference type="Antibodypedia" id="45957">
    <property type="antibodies" value="49 antibodies from 13 providers"/>
</dbReference>
<dbReference type="DNASU" id="112418"/>
<dbReference type="Ensembl" id="ENSMUST00000035234.6">
    <property type="protein sequence ID" value="ENSMUSP00000035234.5"/>
    <property type="gene ID" value="ENSMUSG00000032611.10"/>
</dbReference>
<dbReference type="GeneID" id="112418"/>
<dbReference type="KEGG" id="mmu:112418"/>
<dbReference type="UCSC" id="uc009rpk.2">
    <property type="organism name" value="mouse"/>
</dbReference>
<dbReference type="AGR" id="MGI:2148248"/>
<dbReference type="MGI" id="MGI:2148248">
    <property type="gene designation" value="1700102P08Rik"/>
</dbReference>
<dbReference type="VEuPathDB" id="HostDB:ENSMUSG00000032611"/>
<dbReference type="eggNOG" id="ENOG502S5U4">
    <property type="taxonomic scope" value="Eukaryota"/>
</dbReference>
<dbReference type="GeneTree" id="ENSGT00390000000252"/>
<dbReference type="InParanoid" id="Q9D9C7"/>
<dbReference type="OMA" id="NWRKDSL"/>
<dbReference type="OrthoDB" id="9414700at2759"/>
<dbReference type="PhylomeDB" id="Q9D9C7"/>
<dbReference type="TreeFam" id="TF336411"/>
<dbReference type="BioGRID-ORCS" id="112418">
    <property type="hits" value="3 hits in 77 CRISPR screens"/>
</dbReference>
<dbReference type="ChiTaRS" id="1700102P08Rik">
    <property type="organism name" value="mouse"/>
</dbReference>
<dbReference type="PRO" id="PR:Q9D9C7"/>
<dbReference type="Proteomes" id="UP000000589">
    <property type="component" value="Chromosome 9"/>
</dbReference>
<dbReference type="RNAct" id="Q9D9C7">
    <property type="molecule type" value="protein"/>
</dbReference>
<dbReference type="Bgee" id="ENSMUSG00000032611">
    <property type="expression patterns" value="Expressed in spermatocyte and 73 other cell types or tissues"/>
</dbReference>
<dbReference type="GO" id="GO:0030154">
    <property type="term" value="P:cell differentiation"/>
    <property type="evidence" value="ECO:0007669"/>
    <property type="project" value="UniProtKB-KW"/>
</dbReference>
<dbReference type="GO" id="GO:0007283">
    <property type="term" value="P:spermatogenesis"/>
    <property type="evidence" value="ECO:0000315"/>
    <property type="project" value="UniProtKB"/>
</dbReference>
<dbReference type="InterPro" id="IPR031670">
    <property type="entry name" value="DUF4712"/>
</dbReference>
<dbReference type="PANTHER" id="PTHR36680">
    <property type="entry name" value="HYPOTHETICAL LOC498675"/>
    <property type="match status" value="1"/>
</dbReference>
<dbReference type="PANTHER" id="PTHR36680:SF1">
    <property type="entry name" value="HYPOTHETICAL LOC498675"/>
    <property type="match status" value="1"/>
</dbReference>
<dbReference type="Pfam" id="PF15830">
    <property type="entry name" value="DUF4712"/>
    <property type="match status" value="1"/>
</dbReference>
<proteinExistence type="evidence at protein level"/>
<protein>
    <recommendedName>
        <fullName>Uncharacterized protein C3orf62 homolog</fullName>
    </recommendedName>
</protein>
<evidence type="ECO:0000269" key="1">
    <source>
    </source>
</evidence>
<evidence type="ECO:0000305" key="2"/>
<evidence type="ECO:0007744" key="3">
    <source>
    </source>
</evidence>
<accession>Q9D9C7</accession>
<accession>A0A0R4J0D7</accession>
<accession>Q6P8V6</accession>
<reference key="1">
    <citation type="journal article" date="2005" name="Science">
        <title>The transcriptional landscape of the mammalian genome.</title>
        <authorList>
            <person name="Carninci P."/>
            <person name="Kasukawa T."/>
            <person name="Katayama S."/>
            <person name="Gough J."/>
            <person name="Frith M.C."/>
            <person name="Maeda N."/>
            <person name="Oyama R."/>
            <person name="Ravasi T."/>
            <person name="Lenhard B."/>
            <person name="Wells C."/>
            <person name="Kodzius R."/>
            <person name="Shimokawa K."/>
            <person name="Bajic V.B."/>
            <person name="Brenner S.E."/>
            <person name="Batalov S."/>
            <person name="Forrest A.R."/>
            <person name="Zavolan M."/>
            <person name="Davis M.J."/>
            <person name="Wilming L.G."/>
            <person name="Aidinis V."/>
            <person name="Allen J.E."/>
            <person name="Ambesi-Impiombato A."/>
            <person name="Apweiler R."/>
            <person name="Aturaliya R.N."/>
            <person name="Bailey T.L."/>
            <person name="Bansal M."/>
            <person name="Baxter L."/>
            <person name="Beisel K.W."/>
            <person name="Bersano T."/>
            <person name="Bono H."/>
            <person name="Chalk A.M."/>
            <person name="Chiu K.P."/>
            <person name="Choudhary V."/>
            <person name="Christoffels A."/>
            <person name="Clutterbuck D.R."/>
            <person name="Crowe M.L."/>
            <person name="Dalla E."/>
            <person name="Dalrymple B.P."/>
            <person name="de Bono B."/>
            <person name="Della Gatta G."/>
            <person name="di Bernardo D."/>
            <person name="Down T."/>
            <person name="Engstrom P."/>
            <person name="Fagiolini M."/>
            <person name="Faulkner G."/>
            <person name="Fletcher C.F."/>
            <person name="Fukushima T."/>
            <person name="Furuno M."/>
            <person name="Futaki S."/>
            <person name="Gariboldi M."/>
            <person name="Georgii-Hemming P."/>
            <person name="Gingeras T.R."/>
            <person name="Gojobori T."/>
            <person name="Green R.E."/>
            <person name="Gustincich S."/>
            <person name="Harbers M."/>
            <person name="Hayashi Y."/>
            <person name="Hensch T.K."/>
            <person name="Hirokawa N."/>
            <person name="Hill D."/>
            <person name="Huminiecki L."/>
            <person name="Iacono M."/>
            <person name="Ikeo K."/>
            <person name="Iwama A."/>
            <person name="Ishikawa T."/>
            <person name="Jakt M."/>
            <person name="Kanapin A."/>
            <person name="Katoh M."/>
            <person name="Kawasawa Y."/>
            <person name="Kelso J."/>
            <person name="Kitamura H."/>
            <person name="Kitano H."/>
            <person name="Kollias G."/>
            <person name="Krishnan S.P."/>
            <person name="Kruger A."/>
            <person name="Kummerfeld S.K."/>
            <person name="Kurochkin I.V."/>
            <person name="Lareau L.F."/>
            <person name="Lazarevic D."/>
            <person name="Lipovich L."/>
            <person name="Liu J."/>
            <person name="Liuni S."/>
            <person name="McWilliam S."/>
            <person name="Madan Babu M."/>
            <person name="Madera M."/>
            <person name="Marchionni L."/>
            <person name="Matsuda H."/>
            <person name="Matsuzawa S."/>
            <person name="Miki H."/>
            <person name="Mignone F."/>
            <person name="Miyake S."/>
            <person name="Morris K."/>
            <person name="Mottagui-Tabar S."/>
            <person name="Mulder N."/>
            <person name="Nakano N."/>
            <person name="Nakauchi H."/>
            <person name="Ng P."/>
            <person name="Nilsson R."/>
            <person name="Nishiguchi S."/>
            <person name="Nishikawa S."/>
            <person name="Nori F."/>
            <person name="Ohara O."/>
            <person name="Okazaki Y."/>
            <person name="Orlando V."/>
            <person name="Pang K.C."/>
            <person name="Pavan W.J."/>
            <person name="Pavesi G."/>
            <person name="Pesole G."/>
            <person name="Petrovsky N."/>
            <person name="Piazza S."/>
            <person name="Reed J."/>
            <person name="Reid J.F."/>
            <person name="Ring B.Z."/>
            <person name="Ringwald M."/>
            <person name="Rost B."/>
            <person name="Ruan Y."/>
            <person name="Salzberg S.L."/>
            <person name="Sandelin A."/>
            <person name="Schneider C."/>
            <person name="Schoenbach C."/>
            <person name="Sekiguchi K."/>
            <person name="Semple C.A."/>
            <person name="Seno S."/>
            <person name="Sessa L."/>
            <person name="Sheng Y."/>
            <person name="Shibata Y."/>
            <person name="Shimada H."/>
            <person name="Shimada K."/>
            <person name="Silva D."/>
            <person name="Sinclair B."/>
            <person name="Sperling S."/>
            <person name="Stupka E."/>
            <person name="Sugiura K."/>
            <person name="Sultana R."/>
            <person name="Takenaka Y."/>
            <person name="Taki K."/>
            <person name="Tammoja K."/>
            <person name="Tan S.L."/>
            <person name="Tang S."/>
            <person name="Taylor M.S."/>
            <person name="Tegner J."/>
            <person name="Teichmann S.A."/>
            <person name="Ueda H.R."/>
            <person name="van Nimwegen E."/>
            <person name="Verardo R."/>
            <person name="Wei C.L."/>
            <person name="Yagi K."/>
            <person name="Yamanishi H."/>
            <person name="Zabarovsky E."/>
            <person name="Zhu S."/>
            <person name="Zimmer A."/>
            <person name="Hide W."/>
            <person name="Bult C."/>
            <person name="Grimmond S.M."/>
            <person name="Teasdale R.D."/>
            <person name="Liu E.T."/>
            <person name="Brusic V."/>
            <person name="Quackenbush J."/>
            <person name="Wahlestedt C."/>
            <person name="Mattick J.S."/>
            <person name="Hume D.A."/>
            <person name="Kai C."/>
            <person name="Sasaki D."/>
            <person name="Tomaru Y."/>
            <person name="Fukuda S."/>
            <person name="Kanamori-Katayama M."/>
            <person name="Suzuki M."/>
            <person name="Aoki J."/>
            <person name="Arakawa T."/>
            <person name="Iida J."/>
            <person name="Imamura K."/>
            <person name="Itoh M."/>
            <person name="Kato T."/>
            <person name="Kawaji H."/>
            <person name="Kawagashira N."/>
            <person name="Kawashima T."/>
            <person name="Kojima M."/>
            <person name="Kondo S."/>
            <person name="Konno H."/>
            <person name="Nakano K."/>
            <person name="Ninomiya N."/>
            <person name="Nishio T."/>
            <person name="Okada M."/>
            <person name="Plessy C."/>
            <person name="Shibata K."/>
            <person name="Shiraki T."/>
            <person name="Suzuki S."/>
            <person name="Tagami M."/>
            <person name="Waki K."/>
            <person name="Watahiki A."/>
            <person name="Okamura-Oho Y."/>
            <person name="Suzuki H."/>
            <person name="Kawai J."/>
            <person name="Hayashizaki Y."/>
        </authorList>
    </citation>
    <scope>NUCLEOTIDE SEQUENCE [LARGE SCALE MRNA]</scope>
    <source>
        <strain>C57BL/6J</strain>
        <tissue>Testis</tissue>
    </source>
</reference>
<reference key="2">
    <citation type="journal article" date="2009" name="PLoS Biol.">
        <title>Lineage-specific biology revealed by a finished genome assembly of the mouse.</title>
        <authorList>
            <person name="Church D.M."/>
            <person name="Goodstadt L."/>
            <person name="Hillier L.W."/>
            <person name="Zody M.C."/>
            <person name="Goldstein S."/>
            <person name="She X."/>
            <person name="Bult C.J."/>
            <person name="Agarwala R."/>
            <person name="Cherry J.L."/>
            <person name="DiCuccio M."/>
            <person name="Hlavina W."/>
            <person name="Kapustin Y."/>
            <person name="Meric P."/>
            <person name="Maglott D."/>
            <person name="Birtle Z."/>
            <person name="Marques A.C."/>
            <person name="Graves T."/>
            <person name="Zhou S."/>
            <person name="Teague B."/>
            <person name="Potamousis K."/>
            <person name="Churas C."/>
            <person name="Place M."/>
            <person name="Herschleb J."/>
            <person name="Runnheim R."/>
            <person name="Forrest D."/>
            <person name="Amos-Landgraf J."/>
            <person name="Schwartz D.C."/>
            <person name="Cheng Z."/>
            <person name="Lindblad-Toh K."/>
            <person name="Eichler E.E."/>
            <person name="Ponting C.P."/>
        </authorList>
    </citation>
    <scope>NUCLEOTIDE SEQUENCE [LARGE SCALE GENOMIC DNA]</scope>
    <source>
        <strain>C57BL/6J</strain>
    </source>
</reference>
<reference key="3">
    <citation type="journal article" date="2004" name="Genome Res.">
        <title>The status, quality, and expansion of the NIH full-length cDNA project: the Mammalian Gene Collection (MGC).</title>
        <authorList>
            <consortium name="The MGC Project Team"/>
        </authorList>
    </citation>
    <scope>NUCLEOTIDE SEQUENCE [LARGE SCALE MRNA]</scope>
    <source>
        <tissue>Testis</tissue>
    </source>
</reference>
<reference key="4">
    <citation type="journal article" date="2010" name="Cell">
        <title>A tissue-specific atlas of mouse protein phosphorylation and expression.</title>
        <authorList>
            <person name="Huttlin E.L."/>
            <person name="Jedrychowski M.P."/>
            <person name="Elias J.E."/>
            <person name="Goswami T."/>
            <person name="Rad R."/>
            <person name="Beausoleil S.A."/>
            <person name="Villen J."/>
            <person name="Haas W."/>
            <person name="Sowa M.E."/>
            <person name="Gygi S.P."/>
        </authorList>
    </citation>
    <scope>PHOSPHORYLATION [LARGE SCALE ANALYSIS] AT SER-195 AND SER-209</scope>
    <scope>IDENTIFICATION BY MASS SPECTROMETRY [LARGE SCALE ANALYSIS]</scope>
    <source>
        <tissue>Liver</tissue>
        <tissue>Testis</tissue>
    </source>
</reference>
<reference key="5">
    <citation type="journal article" date="2020" name="Mol. Reprod. Dev.">
        <title>The testis-specific gene 1700102P08Rik is essential for male fertility.</title>
        <authorList>
            <person name="Wu X.L."/>
            <person name="Yun D.M."/>
            <person name="Gao S."/>
            <person name="Liang A.J."/>
            <person name="Duan Z.Z."/>
            <person name="Wang H.S."/>
            <person name="Wang G.S."/>
            <person name="Sun F."/>
        </authorList>
    </citation>
    <scope>FUNCTION</scope>
    <scope>DISRUPTION PHENOTYPE</scope>
    <scope>TISSUE SPECIFICITY</scope>
</reference>